<evidence type="ECO:0000255" key="1">
    <source>
        <dbReference type="HAMAP-Rule" id="MF_00480"/>
    </source>
</evidence>
<evidence type="ECO:0000305" key="2"/>
<proteinExistence type="inferred from homology"/>
<sequence>MPRKGPVPKREVLPDPVYNSVKVAKLINKVMWDGKKSLAQKICYGAFDIIREKTGRDPLEVFEEALNNVMPVLEVRPRRVGGATYQVPMEVRPERRLSLGIRWIVEYARQRSGKSMMEKLAAEIIDAANNTGGSVKKKEDTHRMAEANKAFAHYRW</sequence>
<gene>
    <name evidence="1" type="primary">rpsG</name>
    <name type="ordered locus">TTE2297</name>
</gene>
<accession>Q8R7V0</accession>
<keyword id="KW-1185">Reference proteome</keyword>
<keyword id="KW-0687">Ribonucleoprotein</keyword>
<keyword id="KW-0689">Ribosomal protein</keyword>
<keyword id="KW-0694">RNA-binding</keyword>
<keyword id="KW-0699">rRNA-binding</keyword>
<keyword id="KW-0820">tRNA-binding</keyword>
<reference key="1">
    <citation type="journal article" date="2002" name="Genome Res.">
        <title>A complete sequence of the T. tengcongensis genome.</title>
        <authorList>
            <person name="Bao Q."/>
            <person name="Tian Y."/>
            <person name="Li W."/>
            <person name="Xu Z."/>
            <person name="Xuan Z."/>
            <person name="Hu S."/>
            <person name="Dong W."/>
            <person name="Yang J."/>
            <person name="Chen Y."/>
            <person name="Xue Y."/>
            <person name="Xu Y."/>
            <person name="Lai X."/>
            <person name="Huang L."/>
            <person name="Dong X."/>
            <person name="Ma Y."/>
            <person name="Ling L."/>
            <person name="Tan H."/>
            <person name="Chen R."/>
            <person name="Wang J."/>
            <person name="Yu J."/>
            <person name="Yang H."/>
        </authorList>
    </citation>
    <scope>NUCLEOTIDE SEQUENCE [LARGE SCALE GENOMIC DNA]</scope>
    <source>
        <strain>DSM 15242 / JCM 11007 / NBRC 100824 / MB4</strain>
    </source>
</reference>
<comment type="function">
    <text evidence="1">One of the primary rRNA binding proteins, it binds directly to 16S rRNA where it nucleates assembly of the head domain of the 30S subunit. Is located at the subunit interface close to the decoding center, probably blocks exit of the E-site tRNA.</text>
</comment>
<comment type="subunit">
    <text evidence="1">Part of the 30S ribosomal subunit. Contacts proteins S9 and S11.</text>
</comment>
<comment type="similarity">
    <text evidence="1">Belongs to the universal ribosomal protein uS7 family.</text>
</comment>
<organism>
    <name type="scientific">Caldanaerobacter subterraneus subsp. tengcongensis (strain DSM 15242 / JCM 11007 / NBRC 100824 / MB4)</name>
    <name type="common">Thermoanaerobacter tengcongensis</name>
    <dbReference type="NCBI Taxonomy" id="273068"/>
    <lineage>
        <taxon>Bacteria</taxon>
        <taxon>Bacillati</taxon>
        <taxon>Bacillota</taxon>
        <taxon>Clostridia</taxon>
        <taxon>Thermoanaerobacterales</taxon>
        <taxon>Thermoanaerobacteraceae</taxon>
        <taxon>Caldanaerobacter</taxon>
    </lineage>
</organism>
<feature type="chain" id="PRO_0000124370" description="Small ribosomal subunit protein uS7">
    <location>
        <begin position="1"/>
        <end position="156"/>
    </location>
</feature>
<protein>
    <recommendedName>
        <fullName evidence="1">Small ribosomal subunit protein uS7</fullName>
    </recommendedName>
    <alternativeName>
        <fullName evidence="2">30S ribosomal protein S7</fullName>
    </alternativeName>
</protein>
<name>RS7_CALS4</name>
<dbReference type="EMBL" id="AE008691">
    <property type="protein sequence ID" value="AAM25439.1"/>
    <property type="molecule type" value="Genomic_DNA"/>
</dbReference>
<dbReference type="RefSeq" id="WP_011026342.1">
    <property type="nucleotide sequence ID" value="NC_003869.1"/>
</dbReference>
<dbReference type="SMR" id="Q8R7V0"/>
<dbReference type="STRING" id="273068.TTE2297"/>
<dbReference type="KEGG" id="tte:TTE2297"/>
<dbReference type="eggNOG" id="COG0049">
    <property type="taxonomic scope" value="Bacteria"/>
</dbReference>
<dbReference type="HOGENOM" id="CLU_072226_1_1_9"/>
<dbReference type="OrthoDB" id="9807653at2"/>
<dbReference type="Proteomes" id="UP000000555">
    <property type="component" value="Chromosome"/>
</dbReference>
<dbReference type="GO" id="GO:0015935">
    <property type="term" value="C:small ribosomal subunit"/>
    <property type="evidence" value="ECO:0007669"/>
    <property type="project" value="InterPro"/>
</dbReference>
<dbReference type="GO" id="GO:0019843">
    <property type="term" value="F:rRNA binding"/>
    <property type="evidence" value="ECO:0007669"/>
    <property type="project" value="UniProtKB-UniRule"/>
</dbReference>
<dbReference type="GO" id="GO:0003735">
    <property type="term" value="F:structural constituent of ribosome"/>
    <property type="evidence" value="ECO:0007669"/>
    <property type="project" value="InterPro"/>
</dbReference>
<dbReference type="GO" id="GO:0000049">
    <property type="term" value="F:tRNA binding"/>
    <property type="evidence" value="ECO:0007669"/>
    <property type="project" value="UniProtKB-UniRule"/>
</dbReference>
<dbReference type="GO" id="GO:0006412">
    <property type="term" value="P:translation"/>
    <property type="evidence" value="ECO:0007669"/>
    <property type="project" value="UniProtKB-UniRule"/>
</dbReference>
<dbReference type="CDD" id="cd14869">
    <property type="entry name" value="uS7_Bacteria"/>
    <property type="match status" value="1"/>
</dbReference>
<dbReference type="FunFam" id="1.10.455.10:FF:000001">
    <property type="entry name" value="30S ribosomal protein S7"/>
    <property type="match status" value="1"/>
</dbReference>
<dbReference type="Gene3D" id="1.10.455.10">
    <property type="entry name" value="Ribosomal protein S7 domain"/>
    <property type="match status" value="1"/>
</dbReference>
<dbReference type="HAMAP" id="MF_00480_B">
    <property type="entry name" value="Ribosomal_uS7_B"/>
    <property type="match status" value="1"/>
</dbReference>
<dbReference type="InterPro" id="IPR000235">
    <property type="entry name" value="Ribosomal_uS7"/>
</dbReference>
<dbReference type="InterPro" id="IPR005717">
    <property type="entry name" value="Ribosomal_uS7_bac/org-type"/>
</dbReference>
<dbReference type="InterPro" id="IPR023798">
    <property type="entry name" value="Ribosomal_uS7_dom"/>
</dbReference>
<dbReference type="InterPro" id="IPR036823">
    <property type="entry name" value="Ribosomal_uS7_dom_sf"/>
</dbReference>
<dbReference type="NCBIfam" id="TIGR01029">
    <property type="entry name" value="rpsG_bact"/>
    <property type="match status" value="1"/>
</dbReference>
<dbReference type="PANTHER" id="PTHR11205">
    <property type="entry name" value="RIBOSOMAL PROTEIN S7"/>
    <property type="match status" value="1"/>
</dbReference>
<dbReference type="Pfam" id="PF00177">
    <property type="entry name" value="Ribosomal_S7"/>
    <property type="match status" value="1"/>
</dbReference>
<dbReference type="PIRSF" id="PIRSF002122">
    <property type="entry name" value="RPS7p_RPS7a_RPS5e_RPS7o"/>
    <property type="match status" value="1"/>
</dbReference>
<dbReference type="SUPFAM" id="SSF47973">
    <property type="entry name" value="Ribosomal protein S7"/>
    <property type="match status" value="1"/>
</dbReference>